<evidence type="ECO:0000255" key="1">
    <source>
        <dbReference type="HAMAP-Rule" id="MF_00817"/>
    </source>
</evidence>
<protein>
    <recommendedName>
        <fullName evidence="1">NADPH-dependent 7-cyano-7-deazaguanine reductase</fullName>
        <ecNumber evidence="1">1.7.1.13</ecNumber>
    </recommendedName>
    <alternativeName>
        <fullName evidence="1">7-cyano-7-carbaguanine reductase</fullName>
    </alternativeName>
    <alternativeName>
        <fullName evidence="1">NADPH-dependent nitrile oxidoreductase</fullName>
    </alternativeName>
    <alternativeName>
        <fullName evidence="1">PreQ(0) reductase</fullName>
    </alternativeName>
</protein>
<name>QUEF_ECO57</name>
<comment type="function">
    <text evidence="1">Catalyzes the NADPH-dependent reduction of 7-cyano-7-deazaguanine (preQ0) to 7-aminomethyl-7-deazaguanine (preQ1).</text>
</comment>
<comment type="catalytic activity">
    <reaction evidence="1">
        <text>7-aminomethyl-7-carbaguanine + 2 NADP(+) = 7-cyano-7-deazaguanine + 2 NADPH + 3 H(+)</text>
        <dbReference type="Rhea" id="RHEA:13409"/>
        <dbReference type="ChEBI" id="CHEBI:15378"/>
        <dbReference type="ChEBI" id="CHEBI:45075"/>
        <dbReference type="ChEBI" id="CHEBI:57783"/>
        <dbReference type="ChEBI" id="CHEBI:58349"/>
        <dbReference type="ChEBI" id="CHEBI:58703"/>
        <dbReference type="EC" id="1.7.1.13"/>
    </reaction>
</comment>
<comment type="pathway">
    <text evidence="1">tRNA modification; tRNA-queuosine biosynthesis.</text>
</comment>
<comment type="subunit">
    <text evidence="1">Homodimer.</text>
</comment>
<comment type="subcellular location">
    <subcellularLocation>
        <location evidence="1">Cytoplasm</location>
    </subcellularLocation>
</comment>
<comment type="similarity">
    <text evidence="1">Belongs to the GTP cyclohydrolase I family. QueF type 2 subfamily.</text>
</comment>
<gene>
    <name evidence="1" type="primary">queF</name>
    <name type="ordered locus">Z4111</name>
    <name type="ordered locus">ECs3654</name>
</gene>
<accession>Q8X6S9</accession>
<accession>Q7AB72</accession>
<organism>
    <name type="scientific">Escherichia coli O157:H7</name>
    <dbReference type="NCBI Taxonomy" id="83334"/>
    <lineage>
        <taxon>Bacteria</taxon>
        <taxon>Pseudomonadati</taxon>
        <taxon>Pseudomonadota</taxon>
        <taxon>Gammaproteobacteria</taxon>
        <taxon>Enterobacterales</taxon>
        <taxon>Enterobacteriaceae</taxon>
        <taxon>Escherichia</taxon>
    </lineage>
</organism>
<reference key="1">
    <citation type="journal article" date="2001" name="Nature">
        <title>Genome sequence of enterohaemorrhagic Escherichia coli O157:H7.</title>
        <authorList>
            <person name="Perna N.T."/>
            <person name="Plunkett G. III"/>
            <person name="Burland V."/>
            <person name="Mau B."/>
            <person name="Glasner J.D."/>
            <person name="Rose D.J."/>
            <person name="Mayhew G.F."/>
            <person name="Evans P.S."/>
            <person name="Gregor J."/>
            <person name="Kirkpatrick H.A."/>
            <person name="Posfai G."/>
            <person name="Hackett J."/>
            <person name="Klink S."/>
            <person name="Boutin A."/>
            <person name="Shao Y."/>
            <person name="Miller L."/>
            <person name="Grotbeck E.J."/>
            <person name="Davis N.W."/>
            <person name="Lim A."/>
            <person name="Dimalanta E.T."/>
            <person name="Potamousis K."/>
            <person name="Apodaca J."/>
            <person name="Anantharaman T.S."/>
            <person name="Lin J."/>
            <person name="Yen G."/>
            <person name="Schwartz D.C."/>
            <person name="Welch R.A."/>
            <person name="Blattner F.R."/>
        </authorList>
    </citation>
    <scope>NUCLEOTIDE SEQUENCE [LARGE SCALE GENOMIC DNA]</scope>
    <source>
        <strain>O157:H7 / EDL933 / ATCC 700927 / EHEC</strain>
    </source>
</reference>
<reference key="2">
    <citation type="journal article" date="2001" name="DNA Res.">
        <title>Complete genome sequence of enterohemorrhagic Escherichia coli O157:H7 and genomic comparison with a laboratory strain K-12.</title>
        <authorList>
            <person name="Hayashi T."/>
            <person name="Makino K."/>
            <person name="Ohnishi M."/>
            <person name="Kurokawa K."/>
            <person name="Ishii K."/>
            <person name="Yokoyama K."/>
            <person name="Han C.-G."/>
            <person name="Ohtsubo E."/>
            <person name="Nakayama K."/>
            <person name="Murata T."/>
            <person name="Tanaka M."/>
            <person name="Tobe T."/>
            <person name="Iida T."/>
            <person name="Takami H."/>
            <person name="Honda T."/>
            <person name="Sasakawa C."/>
            <person name="Ogasawara N."/>
            <person name="Yasunaga T."/>
            <person name="Kuhara S."/>
            <person name="Shiba T."/>
            <person name="Hattori M."/>
            <person name="Shinagawa H."/>
        </authorList>
    </citation>
    <scope>NUCLEOTIDE SEQUENCE [LARGE SCALE GENOMIC DNA]</scope>
    <source>
        <strain>O157:H7 / Sakai / RIMD 0509952 / EHEC</strain>
    </source>
</reference>
<feature type="chain" id="PRO_0000163032" description="NADPH-dependent 7-cyano-7-deazaguanine reductase">
    <location>
        <begin position="1"/>
        <end position="282"/>
    </location>
</feature>
<feature type="active site" description="Thioimide intermediate" evidence="1">
    <location>
        <position position="190"/>
    </location>
</feature>
<feature type="active site" description="Proton donor" evidence="1">
    <location>
        <position position="197"/>
    </location>
</feature>
<feature type="binding site" evidence="1">
    <location>
        <begin position="88"/>
        <end position="90"/>
    </location>
    <ligand>
        <name>substrate</name>
    </ligand>
</feature>
<feature type="binding site" evidence="1">
    <location>
        <begin position="90"/>
        <end position="91"/>
    </location>
    <ligand>
        <name>NADPH</name>
        <dbReference type="ChEBI" id="CHEBI:57783"/>
    </ligand>
</feature>
<feature type="binding site" evidence="1">
    <location>
        <begin position="229"/>
        <end position="230"/>
    </location>
    <ligand>
        <name>substrate</name>
    </ligand>
</feature>
<feature type="binding site" evidence="1">
    <location>
        <begin position="258"/>
        <end position="259"/>
    </location>
    <ligand>
        <name>NADPH</name>
        <dbReference type="ChEBI" id="CHEBI:57783"/>
    </ligand>
</feature>
<sequence>MSSYANHQALAGLTLGKSTDYRDTYDASLLQGVPRSLNRDPLGLKADNLPFQGTDIWTLYELSWLNAKGLPQVAVGHVELDYTSVNLIESKSFKLYLNSFNQTRFNNWDEVRQTLERDLSTCAQGEVSVALYRLDELEGQPIGHFNGTCIDDQDITIDNYEFTTDYLENATSGEKVVEETLVSHLLKSNCLITHQPDWGSIQIQYRGRQIDREKLLRYLVSFRHHNEFHEQCVERIFNDLLRFCQPEKLSVYARYTRRGGLDINPWRSNSDFVPSTTRLVRQ</sequence>
<proteinExistence type="inferred from homology"/>
<keyword id="KW-0963">Cytoplasm</keyword>
<keyword id="KW-0521">NADP</keyword>
<keyword id="KW-0560">Oxidoreductase</keyword>
<keyword id="KW-0671">Queuosine biosynthesis</keyword>
<keyword id="KW-1185">Reference proteome</keyword>
<dbReference type="EC" id="1.7.1.13" evidence="1"/>
<dbReference type="EMBL" id="AE005174">
    <property type="protein sequence ID" value="AAG57908.1"/>
    <property type="molecule type" value="Genomic_DNA"/>
</dbReference>
<dbReference type="EMBL" id="BA000007">
    <property type="protein sequence ID" value="BAB37077.1"/>
    <property type="molecule type" value="Genomic_DNA"/>
</dbReference>
<dbReference type="PIR" id="F91085">
    <property type="entry name" value="F91085"/>
</dbReference>
<dbReference type="PIR" id="H85930">
    <property type="entry name" value="H85930"/>
</dbReference>
<dbReference type="RefSeq" id="NP_311681.1">
    <property type="nucleotide sequence ID" value="NC_002695.1"/>
</dbReference>
<dbReference type="RefSeq" id="WP_000100435.1">
    <property type="nucleotide sequence ID" value="NZ_VOAI01000003.1"/>
</dbReference>
<dbReference type="SMR" id="Q8X6S9"/>
<dbReference type="STRING" id="155864.Z4111"/>
<dbReference type="GeneID" id="916536"/>
<dbReference type="KEGG" id="ece:Z4111"/>
<dbReference type="KEGG" id="ecs:ECs_3654"/>
<dbReference type="PATRIC" id="fig|386585.9.peg.3820"/>
<dbReference type="eggNOG" id="COG0780">
    <property type="taxonomic scope" value="Bacteria"/>
</dbReference>
<dbReference type="eggNOG" id="COG2904">
    <property type="taxonomic scope" value="Bacteria"/>
</dbReference>
<dbReference type="HOGENOM" id="CLU_054738_0_0_6"/>
<dbReference type="OMA" id="QCVERIY"/>
<dbReference type="UniPathway" id="UPA00392"/>
<dbReference type="Proteomes" id="UP000000558">
    <property type="component" value="Chromosome"/>
</dbReference>
<dbReference type="Proteomes" id="UP000002519">
    <property type="component" value="Chromosome"/>
</dbReference>
<dbReference type="GO" id="GO:0005737">
    <property type="term" value="C:cytoplasm"/>
    <property type="evidence" value="ECO:0007669"/>
    <property type="project" value="UniProtKB-SubCell"/>
</dbReference>
<dbReference type="GO" id="GO:0033739">
    <property type="term" value="F:preQ1 synthase activity"/>
    <property type="evidence" value="ECO:0007669"/>
    <property type="project" value="UniProtKB-UniRule"/>
</dbReference>
<dbReference type="GO" id="GO:0008616">
    <property type="term" value="P:queuosine biosynthetic process"/>
    <property type="evidence" value="ECO:0007669"/>
    <property type="project" value="UniProtKB-UniRule"/>
</dbReference>
<dbReference type="GO" id="GO:0006400">
    <property type="term" value="P:tRNA modification"/>
    <property type="evidence" value="ECO:0007669"/>
    <property type="project" value="UniProtKB-UniRule"/>
</dbReference>
<dbReference type="FunFam" id="3.30.1130.10:FF:000004">
    <property type="entry name" value="NADPH-dependent 7-cyano-7-deazaguanine reductase"/>
    <property type="match status" value="1"/>
</dbReference>
<dbReference type="Gene3D" id="3.30.1130.10">
    <property type="match status" value="2"/>
</dbReference>
<dbReference type="HAMAP" id="MF_00817">
    <property type="entry name" value="QueF_type2"/>
    <property type="match status" value="1"/>
</dbReference>
<dbReference type="InterPro" id="IPR043133">
    <property type="entry name" value="GTP-CH-I_C/QueF"/>
</dbReference>
<dbReference type="InterPro" id="IPR050084">
    <property type="entry name" value="NADPH_dep_7-cyano-7-deazaG_red"/>
</dbReference>
<dbReference type="InterPro" id="IPR029500">
    <property type="entry name" value="QueF"/>
</dbReference>
<dbReference type="InterPro" id="IPR029139">
    <property type="entry name" value="QueF_N"/>
</dbReference>
<dbReference type="InterPro" id="IPR016428">
    <property type="entry name" value="QueF_type2"/>
</dbReference>
<dbReference type="NCBIfam" id="TIGR03138">
    <property type="entry name" value="QueF"/>
    <property type="match status" value="1"/>
</dbReference>
<dbReference type="PANTHER" id="PTHR34354">
    <property type="entry name" value="NADPH-DEPENDENT 7-CYANO-7-DEAZAGUANINE REDUCTASE"/>
    <property type="match status" value="1"/>
</dbReference>
<dbReference type="PANTHER" id="PTHR34354:SF1">
    <property type="entry name" value="NADPH-DEPENDENT 7-CYANO-7-DEAZAGUANINE REDUCTASE"/>
    <property type="match status" value="1"/>
</dbReference>
<dbReference type="Pfam" id="PF14489">
    <property type="entry name" value="QueF"/>
    <property type="match status" value="1"/>
</dbReference>
<dbReference type="Pfam" id="PF14819">
    <property type="entry name" value="QueF_N"/>
    <property type="match status" value="1"/>
</dbReference>
<dbReference type="PIRSF" id="PIRSF004750">
    <property type="entry name" value="Nitrile_oxidored_YqcD_prd"/>
    <property type="match status" value="1"/>
</dbReference>
<dbReference type="SUPFAM" id="SSF55620">
    <property type="entry name" value="Tetrahydrobiopterin biosynthesis enzymes-like"/>
    <property type="match status" value="1"/>
</dbReference>